<gene>
    <name type="ordered locus">VV1_2093</name>
</gene>
<dbReference type="EMBL" id="AE016795">
    <property type="protein sequence ID" value="AAO10481.1"/>
    <property type="molecule type" value="Genomic_DNA"/>
</dbReference>
<dbReference type="RefSeq" id="WP_011079979.1">
    <property type="nucleotide sequence ID" value="NC_004459.3"/>
</dbReference>
<dbReference type="SMR" id="Q8DAU5"/>
<dbReference type="KEGG" id="vvu:VV1_2093"/>
<dbReference type="HOGENOM" id="CLU_101021_1_0_6"/>
<dbReference type="Proteomes" id="UP000002275">
    <property type="component" value="Chromosome 1"/>
</dbReference>
<dbReference type="Gene3D" id="1.10.287.680">
    <property type="entry name" value="Helix hairpin bin"/>
    <property type="match status" value="1"/>
</dbReference>
<dbReference type="Gene3D" id="1.10.3190.10">
    <property type="entry name" value="yfbu gene product, domain 2"/>
    <property type="match status" value="1"/>
</dbReference>
<dbReference type="HAMAP" id="MF_00762">
    <property type="entry name" value="UPF0304"/>
    <property type="match status" value="1"/>
</dbReference>
<dbReference type="InterPro" id="IPR005587">
    <property type="entry name" value="UPF0304_YfbU"/>
</dbReference>
<dbReference type="InterPro" id="IPR023146">
    <property type="entry name" value="YfbU_alpha-helical_sf"/>
</dbReference>
<dbReference type="InterPro" id="IPR023145">
    <property type="entry name" value="YfbU_helix-hairpin_sf"/>
</dbReference>
<dbReference type="NCBIfam" id="NF003936">
    <property type="entry name" value="PRK05445.1"/>
    <property type="match status" value="1"/>
</dbReference>
<dbReference type="Pfam" id="PF03887">
    <property type="entry name" value="YfbU"/>
    <property type="match status" value="1"/>
</dbReference>
<dbReference type="PIRSF" id="PIRSF006272">
    <property type="entry name" value="UCP006272"/>
    <property type="match status" value="1"/>
</dbReference>
<dbReference type="SUPFAM" id="SSF116960">
    <property type="entry name" value="YfbU-like"/>
    <property type="match status" value="1"/>
</dbReference>
<organism>
    <name type="scientific">Vibrio vulnificus (strain CMCP6)</name>
    <dbReference type="NCBI Taxonomy" id="216895"/>
    <lineage>
        <taxon>Bacteria</taxon>
        <taxon>Pseudomonadati</taxon>
        <taxon>Pseudomonadota</taxon>
        <taxon>Gammaproteobacteria</taxon>
        <taxon>Vibrionales</taxon>
        <taxon>Vibrionaceae</taxon>
        <taxon>Vibrio</taxon>
    </lineage>
</organism>
<feature type="chain" id="PRO_0000218172" description="UPF0304 protein VV1_2093">
    <location>
        <begin position="1"/>
        <end position="166"/>
    </location>
</feature>
<evidence type="ECO:0000255" key="1">
    <source>
        <dbReference type="HAMAP-Rule" id="MF_00762"/>
    </source>
</evidence>
<reference key="1">
    <citation type="submission" date="2002-12" db="EMBL/GenBank/DDBJ databases">
        <title>Complete genome sequence of Vibrio vulnificus CMCP6.</title>
        <authorList>
            <person name="Rhee J.H."/>
            <person name="Kim S.Y."/>
            <person name="Chung S.S."/>
            <person name="Kim J.J."/>
            <person name="Moon Y.H."/>
            <person name="Jeong H."/>
            <person name="Choy H.E."/>
        </authorList>
    </citation>
    <scope>NUCLEOTIDE SEQUENCE [LARGE SCALE GENOMIC DNA]</scope>
    <source>
        <strain>CMCP6</strain>
    </source>
</reference>
<name>Y2093_VIBVU</name>
<proteinExistence type="inferred from homology"/>
<comment type="similarity">
    <text evidence="1">Belongs to the UPF0304 family.</text>
</comment>
<sequence length="166" mass="19927">MEMSNAQRLILSNQYKLMSQLDPENAEKYQRFQTIVERGYELQMRELNKDYGCITEALCKEIIDVMEMYHAMQESFRMLDADESTQVDQRRLQFLGFDIASEAQLVHYVRFLTESEGLYPQFDKGDHHFNSQMPMLEKYRRMLATWRKCPRQYHLCATELRQIFNA</sequence>
<protein>
    <recommendedName>
        <fullName evidence="1">UPF0304 protein VV1_2093</fullName>
    </recommendedName>
</protein>
<accession>Q8DAU5</accession>